<feature type="chain" id="PRO_0000150880" description="Olfactory receptor-like protein COR1">
    <location>
        <begin position="1"/>
        <end position="318"/>
    </location>
</feature>
<feature type="topological domain" description="Extracellular" evidence="1">
    <location>
        <begin position="1"/>
        <end position="26"/>
    </location>
</feature>
<feature type="transmembrane region" description="Helical; Name=1" evidence="1">
    <location>
        <begin position="27"/>
        <end position="49"/>
    </location>
</feature>
<feature type="topological domain" description="Cytoplasmic" evidence="1">
    <location>
        <begin position="50"/>
        <end position="57"/>
    </location>
</feature>
<feature type="transmembrane region" description="Helical; Name=2" evidence="1">
    <location>
        <begin position="58"/>
        <end position="79"/>
    </location>
</feature>
<feature type="topological domain" description="Extracellular" evidence="1">
    <location>
        <begin position="80"/>
        <end position="100"/>
    </location>
</feature>
<feature type="transmembrane region" description="Helical; Name=3" evidence="1">
    <location>
        <begin position="101"/>
        <end position="120"/>
    </location>
</feature>
<feature type="topological domain" description="Cytoplasmic" evidence="1">
    <location>
        <begin position="121"/>
        <end position="139"/>
    </location>
</feature>
<feature type="transmembrane region" description="Helical; Name=4" evidence="1">
    <location>
        <begin position="140"/>
        <end position="164"/>
    </location>
</feature>
<feature type="topological domain" description="Extracellular" evidence="1">
    <location>
        <begin position="165"/>
        <end position="205"/>
    </location>
</feature>
<feature type="transmembrane region" description="Helical; Name=5" evidence="1">
    <location>
        <begin position="206"/>
        <end position="226"/>
    </location>
</feature>
<feature type="topological domain" description="Cytoplasmic" evidence="1">
    <location>
        <begin position="227"/>
        <end position="239"/>
    </location>
</feature>
<feature type="transmembrane region" description="Helical; Name=6" evidence="1">
    <location>
        <begin position="240"/>
        <end position="260"/>
    </location>
</feature>
<feature type="topological domain" description="Extracellular" evidence="1">
    <location>
        <begin position="261"/>
        <end position="271"/>
    </location>
</feature>
<feature type="transmembrane region" description="Helical; Name=7" evidence="1">
    <location>
        <begin position="272"/>
        <end position="292"/>
    </location>
</feature>
<feature type="topological domain" description="Cytoplasmic" evidence="1">
    <location>
        <begin position="293"/>
        <end position="318"/>
    </location>
</feature>
<feature type="glycosylation site" description="N-linked (GlcNAc...) asparagine" evidence="1">
    <location>
        <position position="5"/>
    </location>
</feature>
<feature type="disulfide bond" evidence="2">
    <location>
        <begin position="97"/>
        <end position="179"/>
    </location>
</feature>
<sequence>MASGNCTTPTTFILSGLTDNPGLQMPLFMVFLAIYTITLLTNLGLIALISVDLHLQTPMYIFLQNLSFTDAAYSTVITPKMLATFLEERKTISYVGCILQYFSFVLLTVTESLLLAVMAYDRYVAICKPLLYPSIMTKAVCWRLVESLYFLAFLNSLVHTSGLLKLSFCYSNVVNHFFCDISPLFQISSSSIAISELLVIISGSLFVMSSIIIILISYVFIILTVVMIRSKDGKYKAFSTCTSHLMAVSLFHGTVIFMYLRPVKLFSLDTDKIASLFYTVVIPMLNPLIYSWRNKEVKDALRRLTATTFGFIDSKAVQ</sequence>
<organism>
    <name type="scientific">Gallus gallus</name>
    <name type="common">Chicken</name>
    <dbReference type="NCBI Taxonomy" id="9031"/>
    <lineage>
        <taxon>Eukaryota</taxon>
        <taxon>Metazoa</taxon>
        <taxon>Chordata</taxon>
        <taxon>Craniata</taxon>
        <taxon>Vertebrata</taxon>
        <taxon>Euteleostomi</taxon>
        <taxon>Archelosauria</taxon>
        <taxon>Archosauria</taxon>
        <taxon>Dinosauria</taxon>
        <taxon>Saurischia</taxon>
        <taxon>Theropoda</taxon>
        <taxon>Coelurosauria</taxon>
        <taxon>Aves</taxon>
        <taxon>Neognathae</taxon>
        <taxon>Galloanserae</taxon>
        <taxon>Galliformes</taxon>
        <taxon>Phasianidae</taxon>
        <taxon>Phasianinae</taxon>
        <taxon>Gallus</taxon>
    </lineage>
</organism>
<name>OLF1_CHICK</name>
<evidence type="ECO:0000255" key="1"/>
<evidence type="ECO:0000255" key="2">
    <source>
        <dbReference type="PROSITE-ProRule" id="PRU00521"/>
    </source>
</evidence>
<evidence type="ECO:0000305" key="3"/>
<accession>P37067</accession>
<comment type="function">
    <text evidence="3">Odorant receptor.</text>
</comment>
<comment type="subcellular location">
    <subcellularLocation>
        <location>Cell membrane</location>
        <topology>Multi-pass membrane protein</topology>
    </subcellularLocation>
</comment>
<comment type="similarity">
    <text evidence="2">Belongs to the G-protein coupled receptor 1 family.</text>
</comment>
<keyword id="KW-1003">Cell membrane</keyword>
<keyword id="KW-1015">Disulfide bond</keyword>
<keyword id="KW-0297">G-protein coupled receptor</keyword>
<keyword id="KW-0325">Glycoprotein</keyword>
<keyword id="KW-0472">Membrane</keyword>
<keyword id="KW-0552">Olfaction</keyword>
<keyword id="KW-0675">Receptor</keyword>
<keyword id="KW-1185">Reference proteome</keyword>
<keyword id="KW-0716">Sensory transduction</keyword>
<keyword id="KW-0807">Transducer</keyword>
<keyword id="KW-0812">Transmembrane</keyword>
<keyword id="KW-1133">Transmembrane helix</keyword>
<dbReference type="EMBL" id="Z79584">
    <property type="protein sequence ID" value="CAB01845.1"/>
    <property type="molecule type" value="Genomic_DNA"/>
</dbReference>
<dbReference type="RefSeq" id="NP_001026716.1">
    <property type="nucleotide sequence ID" value="NM_001031545.1"/>
</dbReference>
<dbReference type="SMR" id="P37067"/>
<dbReference type="FunCoup" id="P37067">
    <property type="interactions" value="4"/>
</dbReference>
<dbReference type="GlyCosmos" id="P37067">
    <property type="glycosylation" value="1 site, No reported glycans"/>
</dbReference>
<dbReference type="GlyGen" id="P37067">
    <property type="glycosylation" value="1 site"/>
</dbReference>
<dbReference type="GeneID" id="428829"/>
<dbReference type="KEGG" id="gga:428829"/>
<dbReference type="CTD" id="428829"/>
<dbReference type="VEuPathDB" id="HostDB:geneid_428829"/>
<dbReference type="InParanoid" id="P37067"/>
<dbReference type="OrthoDB" id="9889152at2759"/>
<dbReference type="PhylomeDB" id="P37067"/>
<dbReference type="PRO" id="PR:P37067"/>
<dbReference type="Proteomes" id="UP000000539">
    <property type="component" value="Unassembled WGS sequence"/>
</dbReference>
<dbReference type="GO" id="GO:0005886">
    <property type="term" value="C:plasma membrane"/>
    <property type="evidence" value="ECO:0007669"/>
    <property type="project" value="UniProtKB-SubCell"/>
</dbReference>
<dbReference type="GO" id="GO:0004930">
    <property type="term" value="F:G protein-coupled receptor activity"/>
    <property type="evidence" value="ECO:0007669"/>
    <property type="project" value="UniProtKB-KW"/>
</dbReference>
<dbReference type="GO" id="GO:0005549">
    <property type="term" value="F:odorant binding"/>
    <property type="evidence" value="ECO:0000318"/>
    <property type="project" value="GO_Central"/>
</dbReference>
<dbReference type="GO" id="GO:0004984">
    <property type="term" value="F:olfactory receptor activity"/>
    <property type="evidence" value="ECO:0000318"/>
    <property type="project" value="GO_Central"/>
</dbReference>
<dbReference type="FunFam" id="1.10.1220.70:FF:000001">
    <property type="entry name" value="Olfactory receptor"/>
    <property type="match status" value="1"/>
</dbReference>
<dbReference type="FunFam" id="1.20.1070.10:FF:000003">
    <property type="entry name" value="Olfactory receptor"/>
    <property type="match status" value="1"/>
</dbReference>
<dbReference type="Gene3D" id="1.20.1070.10">
    <property type="entry name" value="Rhodopsin 7-helix transmembrane proteins"/>
    <property type="match status" value="1"/>
</dbReference>
<dbReference type="InterPro" id="IPR000276">
    <property type="entry name" value="GPCR_Rhodpsn"/>
</dbReference>
<dbReference type="InterPro" id="IPR017452">
    <property type="entry name" value="GPCR_Rhodpsn_7TM"/>
</dbReference>
<dbReference type="InterPro" id="IPR000725">
    <property type="entry name" value="Olfact_rcpt"/>
</dbReference>
<dbReference type="PANTHER" id="PTHR48018">
    <property type="entry name" value="OLFACTORY RECEPTOR"/>
    <property type="match status" value="1"/>
</dbReference>
<dbReference type="Pfam" id="PF13853">
    <property type="entry name" value="7tm_4"/>
    <property type="match status" value="1"/>
</dbReference>
<dbReference type="PRINTS" id="PR00237">
    <property type="entry name" value="GPCRRHODOPSN"/>
</dbReference>
<dbReference type="PRINTS" id="PR00245">
    <property type="entry name" value="OLFACTORYR"/>
</dbReference>
<dbReference type="SUPFAM" id="SSF81321">
    <property type="entry name" value="Family A G protein-coupled receptor-like"/>
    <property type="match status" value="1"/>
</dbReference>
<dbReference type="PROSITE" id="PS00237">
    <property type="entry name" value="G_PROTEIN_RECEP_F1_1"/>
    <property type="match status" value="1"/>
</dbReference>
<dbReference type="PROSITE" id="PS50262">
    <property type="entry name" value="G_PROTEIN_RECEP_F1_2"/>
    <property type="match status" value="1"/>
</dbReference>
<gene>
    <name type="primary">COR1</name>
</gene>
<protein>
    <recommendedName>
        <fullName>Olfactory receptor-like protein COR1</fullName>
    </recommendedName>
</protein>
<reference key="1">
    <citation type="journal article" date="1996" name="Mech. Dev.">
        <title>Olfaction in birds: differential embryonic expression of nine putative odorant receptor genes in the avian olfactory system.</title>
        <authorList>
            <person name="Nef S."/>
            <person name="Allaman I."/>
            <person name="Fiumelli H."/>
            <person name="de Castro E."/>
            <person name="Nef P."/>
        </authorList>
    </citation>
    <scope>NUCLEOTIDE SEQUENCE [GENOMIC DNA]</scope>
    <source>
        <tissue>Olfactory epithelium</tissue>
    </source>
</reference>
<proteinExistence type="inferred from homology"/>